<protein>
    <recommendedName>
        <fullName>Uncharacterized protein HI_0983</fullName>
    </recommendedName>
</protein>
<name>Y983_HAEIN</name>
<accession>P43907</accession>
<organism>
    <name type="scientific">Haemophilus influenzae (strain ATCC 51907 / DSM 11121 / KW20 / Rd)</name>
    <dbReference type="NCBI Taxonomy" id="71421"/>
    <lineage>
        <taxon>Bacteria</taxon>
        <taxon>Pseudomonadati</taxon>
        <taxon>Pseudomonadota</taxon>
        <taxon>Gammaproteobacteria</taxon>
        <taxon>Pasteurellales</taxon>
        <taxon>Pasteurellaceae</taxon>
        <taxon>Haemophilus</taxon>
    </lineage>
</organism>
<gene>
    <name type="ordered locus">HI_0983</name>
</gene>
<dbReference type="EMBL" id="U18657">
    <property type="protein sequence ID" value="AAA70113.1"/>
    <property type="molecule type" value="Genomic_DNA"/>
</dbReference>
<dbReference type="EMBL" id="L42023">
    <property type="protein sequence ID" value="AAC22652.1"/>
    <property type="molecule type" value="Genomic_DNA"/>
</dbReference>
<dbReference type="PIR" id="C57256">
    <property type="entry name" value="C57256"/>
</dbReference>
<dbReference type="RefSeq" id="NP_439146.1">
    <property type="nucleotide sequence ID" value="NC_000907.1"/>
</dbReference>
<dbReference type="STRING" id="71421.HI_0983"/>
<dbReference type="EnsemblBacteria" id="AAC22652">
    <property type="protein sequence ID" value="AAC22652"/>
    <property type="gene ID" value="HI_0983"/>
</dbReference>
<dbReference type="KEGG" id="hin:HI_0983"/>
<dbReference type="PATRIC" id="fig|71421.8.peg.1026"/>
<dbReference type="eggNOG" id="ENOG502ZDNW">
    <property type="taxonomic scope" value="Bacteria"/>
</dbReference>
<dbReference type="HOGENOM" id="CLU_121375_0_0_6"/>
<dbReference type="OrthoDB" id="5690458at2"/>
<dbReference type="BioCyc" id="HINF71421:G1GJ1-1025-MONOMER"/>
<dbReference type="Proteomes" id="UP000000579">
    <property type="component" value="Chromosome"/>
</dbReference>
<dbReference type="PROSITE" id="PS51257">
    <property type="entry name" value="PROKAR_LIPOPROTEIN"/>
    <property type="match status" value="1"/>
</dbReference>
<proteinExistence type="predicted"/>
<keyword id="KW-1185">Reference proteome</keyword>
<feature type="chain" id="PRO_0000077988" description="Uncharacterized protein HI_0983">
    <location>
        <begin position="1"/>
        <end position="193"/>
    </location>
</feature>
<feature type="sequence conflict" description="In Ref. 1; AAA70113." evidence="1" ref="1">
    <original>L</original>
    <variation>F</variation>
    <location>
        <position position="170"/>
    </location>
</feature>
<sequence>MNKIFVILTALILSGCATKLTQLNVPTQLEYNGKHYVLTGSQDFETIARYVYIAKPDTLENWQSEIEILFDRNQPERSIKERIALRERIYRNTGVKDFHFDAIPENSTNPNELNGYVIYSPTKENPSWQVNVMKGRQLSQCGFVQFQYSQKIQQPTRSKHLSVNKVQRHLQKYIVDIERKHLQNLKWQLFCEK</sequence>
<evidence type="ECO:0000305" key="1"/>
<reference key="1">
    <citation type="journal article" date="1995" name="J. Bacteriol.">
        <title>DNA sequence and characterization of Haemophilus influenzae dprA+, a gene required for chromosomal but not plasmid DNA transformation.</title>
        <authorList>
            <person name="Karudapuram S."/>
            <person name="Zhao X."/>
            <person name="Barcak G.J."/>
        </authorList>
    </citation>
    <scope>NUCLEOTIDE SEQUENCE [GENOMIC DNA]</scope>
    <source>
        <strain>ATCC 51907 / DSM 11121 / KW20 / Rd</strain>
    </source>
</reference>
<reference key="2">
    <citation type="journal article" date="1995" name="Science">
        <title>Whole-genome random sequencing and assembly of Haemophilus influenzae Rd.</title>
        <authorList>
            <person name="Fleischmann R.D."/>
            <person name="Adams M.D."/>
            <person name="White O."/>
            <person name="Clayton R.A."/>
            <person name="Kirkness E.F."/>
            <person name="Kerlavage A.R."/>
            <person name="Bult C.J."/>
            <person name="Tomb J.-F."/>
            <person name="Dougherty B.A."/>
            <person name="Merrick J.M."/>
            <person name="McKenney K."/>
            <person name="Sutton G.G."/>
            <person name="FitzHugh W."/>
            <person name="Fields C.A."/>
            <person name="Gocayne J.D."/>
            <person name="Scott J.D."/>
            <person name="Shirley R."/>
            <person name="Liu L.-I."/>
            <person name="Glodek A."/>
            <person name="Kelley J.M."/>
            <person name="Weidman J.F."/>
            <person name="Phillips C.A."/>
            <person name="Spriggs T."/>
            <person name="Hedblom E."/>
            <person name="Cotton M.D."/>
            <person name="Utterback T.R."/>
            <person name="Hanna M.C."/>
            <person name="Nguyen D.T."/>
            <person name="Saudek D.M."/>
            <person name="Brandon R.C."/>
            <person name="Fine L.D."/>
            <person name="Fritchman J.L."/>
            <person name="Fuhrmann J.L."/>
            <person name="Geoghagen N.S.M."/>
            <person name="Gnehm C.L."/>
            <person name="McDonald L.A."/>
            <person name="Small K.V."/>
            <person name="Fraser C.M."/>
            <person name="Smith H.O."/>
            <person name="Venter J.C."/>
        </authorList>
    </citation>
    <scope>NUCLEOTIDE SEQUENCE [LARGE SCALE GENOMIC DNA]</scope>
    <source>
        <strain>ATCC 51907 / DSM 11121 / KW20 / Rd</strain>
    </source>
</reference>